<accession>P40885</accession>
<accession>D6VVX7</accession>
<dbReference type="EMBL" id="Z34098">
    <property type="protein sequence ID" value="CAA83991.1"/>
    <property type="molecule type" value="Genomic_DNA"/>
</dbReference>
<dbReference type="EMBL" id="Z49494">
    <property type="protein sequence ID" value="CAA89516.1"/>
    <property type="molecule type" value="Genomic_DNA"/>
</dbReference>
<dbReference type="EMBL" id="BK006943">
    <property type="protein sequence ID" value="DAA08593.1"/>
    <property type="molecule type" value="Genomic_DNA"/>
</dbReference>
<dbReference type="PIR" id="S50708">
    <property type="entry name" value="S50708"/>
</dbReference>
<dbReference type="RefSeq" id="NP_012316.1">
    <property type="nucleotide sequence ID" value="NM_001181652.1"/>
</dbReference>
<dbReference type="SMR" id="P40885"/>
<dbReference type="BioGRID" id="33562">
    <property type="interactions" value="41"/>
</dbReference>
<dbReference type="DIP" id="DIP-4609N"/>
<dbReference type="FunCoup" id="P40885">
    <property type="interactions" value="1482"/>
</dbReference>
<dbReference type="IntAct" id="P40885">
    <property type="interactions" value="1"/>
</dbReference>
<dbReference type="MINT" id="P40885"/>
<dbReference type="STRING" id="4932.YJL219W"/>
<dbReference type="GlyCosmos" id="P40885">
    <property type="glycosylation" value="2 sites, No reported glycans"/>
</dbReference>
<dbReference type="GlyGen" id="P40885">
    <property type="glycosylation" value="2 sites"/>
</dbReference>
<dbReference type="PaxDb" id="4932-YJL219W"/>
<dbReference type="PeptideAtlas" id="P40885"/>
<dbReference type="EnsemblFungi" id="YJL219W_mRNA">
    <property type="protein sequence ID" value="YJL219W"/>
    <property type="gene ID" value="YJL219W"/>
</dbReference>
<dbReference type="GeneID" id="853236"/>
<dbReference type="KEGG" id="sce:YJL219W"/>
<dbReference type="AGR" id="SGD:S000003755"/>
<dbReference type="SGD" id="S000003755">
    <property type="gene designation" value="HXT9"/>
</dbReference>
<dbReference type="VEuPathDB" id="FungiDB:YJL219W"/>
<dbReference type="eggNOG" id="KOG0254">
    <property type="taxonomic scope" value="Eukaryota"/>
</dbReference>
<dbReference type="GeneTree" id="ENSGT00940000176280"/>
<dbReference type="HOGENOM" id="CLU_001265_30_1_1"/>
<dbReference type="InParanoid" id="P40885"/>
<dbReference type="OMA" id="WMAAVAY"/>
<dbReference type="OrthoDB" id="5141738at2759"/>
<dbReference type="BioCyc" id="YEAST:G3O-31643-MONOMER"/>
<dbReference type="BioGRID-ORCS" id="853236">
    <property type="hits" value="0 hits in 10 CRISPR screens"/>
</dbReference>
<dbReference type="PRO" id="PR:P40885"/>
<dbReference type="Proteomes" id="UP000002311">
    <property type="component" value="Chromosome X"/>
</dbReference>
<dbReference type="RNAct" id="P40885">
    <property type="molecule type" value="protein"/>
</dbReference>
<dbReference type="GO" id="GO:0071944">
    <property type="term" value="C:cell periphery"/>
    <property type="evidence" value="ECO:0007005"/>
    <property type="project" value="SGD"/>
</dbReference>
<dbReference type="GO" id="GO:0000324">
    <property type="term" value="C:fungal-type vacuole"/>
    <property type="evidence" value="ECO:0007005"/>
    <property type="project" value="SGD"/>
</dbReference>
<dbReference type="GO" id="GO:0005886">
    <property type="term" value="C:plasma membrane"/>
    <property type="evidence" value="ECO:0000318"/>
    <property type="project" value="GO_Central"/>
</dbReference>
<dbReference type="GO" id="GO:0005351">
    <property type="term" value="F:carbohydrate:proton symporter activity"/>
    <property type="evidence" value="ECO:0000318"/>
    <property type="project" value="GO_Central"/>
</dbReference>
<dbReference type="GO" id="GO:0055056">
    <property type="term" value="F:D-glucose transmembrane transporter activity"/>
    <property type="evidence" value="ECO:0000315"/>
    <property type="project" value="SGD"/>
</dbReference>
<dbReference type="GO" id="GO:0005353">
    <property type="term" value="F:fructose transmembrane transporter activity"/>
    <property type="evidence" value="ECO:0000315"/>
    <property type="project" value="SGD"/>
</dbReference>
<dbReference type="GO" id="GO:0005354">
    <property type="term" value="F:galactose transmembrane transporter activity"/>
    <property type="evidence" value="ECO:0000315"/>
    <property type="project" value="SGD"/>
</dbReference>
<dbReference type="GO" id="GO:0015578">
    <property type="term" value="F:mannose transmembrane transporter activity"/>
    <property type="evidence" value="ECO:0000315"/>
    <property type="project" value="SGD"/>
</dbReference>
<dbReference type="GO" id="GO:0008643">
    <property type="term" value="P:carbohydrate transport"/>
    <property type="evidence" value="ECO:0000318"/>
    <property type="project" value="GO_Central"/>
</dbReference>
<dbReference type="GO" id="GO:0008645">
    <property type="term" value="P:hexose transmembrane transport"/>
    <property type="evidence" value="ECO:0000315"/>
    <property type="project" value="SGD"/>
</dbReference>
<dbReference type="CDD" id="cd17356">
    <property type="entry name" value="MFS_HXT"/>
    <property type="match status" value="1"/>
</dbReference>
<dbReference type="FunFam" id="1.20.1250.20:FF:000044">
    <property type="entry name" value="Hexose transporter Hxt3p"/>
    <property type="match status" value="1"/>
</dbReference>
<dbReference type="Gene3D" id="1.20.1250.20">
    <property type="entry name" value="MFS general substrate transporter like domains"/>
    <property type="match status" value="1"/>
</dbReference>
<dbReference type="InterPro" id="IPR020846">
    <property type="entry name" value="MFS_dom"/>
</dbReference>
<dbReference type="InterPro" id="IPR005828">
    <property type="entry name" value="MFS_sugar_transport-like"/>
</dbReference>
<dbReference type="InterPro" id="IPR050360">
    <property type="entry name" value="MFS_Sugar_Transporters"/>
</dbReference>
<dbReference type="InterPro" id="IPR036259">
    <property type="entry name" value="MFS_trans_sf"/>
</dbReference>
<dbReference type="InterPro" id="IPR003663">
    <property type="entry name" value="Sugar/inositol_transpt"/>
</dbReference>
<dbReference type="InterPro" id="IPR005829">
    <property type="entry name" value="Sugar_transporter_CS"/>
</dbReference>
<dbReference type="NCBIfam" id="TIGR00879">
    <property type="entry name" value="SP"/>
    <property type="match status" value="1"/>
</dbReference>
<dbReference type="PANTHER" id="PTHR48022:SF75">
    <property type="entry name" value="GALACTOSE TRANSPORTER-RELATED"/>
    <property type="match status" value="1"/>
</dbReference>
<dbReference type="PANTHER" id="PTHR48022">
    <property type="entry name" value="PLASTIDIC GLUCOSE TRANSPORTER 4"/>
    <property type="match status" value="1"/>
</dbReference>
<dbReference type="Pfam" id="PF00083">
    <property type="entry name" value="Sugar_tr"/>
    <property type="match status" value="1"/>
</dbReference>
<dbReference type="PRINTS" id="PR00171">
    <property type="entry name" value="SUGRTRNSPORT"/>
</dbReference>
<dbReference type="SUPFAM" id="SSF103473">
    <property type="entry name" value="MFS general substrate transporter"/>
    <property type="match status" value="1"/>
</dbReference>
<dbReference type="PROSITE" id="PS50850">
    <property type="entry name" value="MFS"/>
    <property type="match status" value="1"/>
</dbReference>
<dbReference type="PROSITE" id="PS00216">
    <property type="entry name" value="SUGAR_TRANSPORT_1"/>
    <property type="match status" value="1"/>
</dbReference>
<dbReference type="PROSITE" id="PS00217">
    <property type="entry name" value="SUGAR_TRANSPORT_2"/>
    <property type="match status" value="1"/>
</dbReference>
<gene>
    <name type="primary">HXT9</name>
    <name type="ordered locus">YJL219W</name>
    <name type="ORF">HRC567</name>
    <name type="ORF">J0222</name>
</gene>
<feature type="chain" id="PRO_0000050399" description="Hexose transporter HXT9">
    <location>
        <begin position="1"/>
        <end position="567"/>
    </location>
</feature>
<feature type="topological domain" description="Cytoplasmic" evidence="1">
    <location>
        <begin position="1"/>
        <end position="56"/>
    </location>
</feature>
<feature type="transmembrane region" description="Helical; Name=1" evidence="1">
    <location>
        <begin position="57"/>
        <end position="77"/>
    </location>
</feature>
<feature type="topological domain" description="Extracellular" evidence="1">
    <location>
        <begin position="78"/>
        <end position="112"/>
    </location>
</feature>
<feature type="transmembrane region" description="Helical; Name=2" evidence="1">
    <location>
        <begin position="113"/>
        <end position="133"/>
    </location>
</feature>
<feature type="topological domain" description="Cytoplasmic" evidence="1">
    <location>
        <begin position="134"/>
        <end position="139"/>
    </location>
</feature>
<feature type="transmembrane region" description="Helical; Name=3" evidence="1">
    <location>
        <begin position="140"/>
        <end position="160"/>
    </location>
</feature>
<feature type="topological domain" description="Extracellular" evidence="1">
    <location>
        <begin position="161"/>
        <end position="170"/>
    </location>
</feature>
<feature type="transmembrane region" description="Helical; Name=4" evidence="1">
    <location>
        <begin position="171"/>
        <end position="191"/>
    </location>
</feature>
<feature type="topological domain" description="Cytoplasmic" evidence="1">
    <location>
        <begin position="192"/>
        <end position="197"/>
    </location>
</feature>
<feature type="transmembrane region" description="Helical; Name=5" evidence="1">
    <location>
        <begin position="198"/>
        <end position="218"/>
    </location>
</feature>
<feature type="topological domain" description="Extracellular" evidence="1">
    <location>
        <begin position="219"/>
        <end position="232"/>
    </location>
</feature>
<feature type="transmembrane region" description="Helical; Name=6" evidence="1">
    <location>
        <begin position="233"/>
        <end position="253"/>
    </location>
</feature>
<feature type="topological domain" description="Cytoplasmic" evidence="1">
    <location>
        <begin position="254"/>
        <end position="336"/>
    </location>
</feature>
<feature type="transmembrane region" description="Helical; Name=7" evidence="1">
    <location>
        <begin position="337"/>
        <end position="353"/>
    </location>
</feature>
<feature type="topological domain" description="Extracellular" evidence="1">
    <location>
        <begin position="354"/>
        <end position="359"/>
    </location>
</feature>
<feature type="transmembrane region" description="Helical; Name=8" evidence="1">
    <location>
        <begin position="360"/>
        <end position="377"/>
    </location>
</feature>
<feature type="topological domain" description="Cytoplasmic" evidence="1">
    <location>
        <begin position="378"/>
        <end position="384"/>
    </location>
</feature>
<feature type="transmembrane region" description="Helical; Name=9" evidence="1">
    <location>
        <begin position="385"/>
        <end position="405"/>
    </location>
</feature>
<feature type="topological domain" description="Extracellular" evidence="1">
    <location>
        <begin position="406"/>
        <end position="429"/>
    </location>
</feature>
<feature type="transmembrane region" description="Helical; Name=10" evidence="1">
    <location>
        <begin position="430"/>
        <end position="450"/>
    </location>
</feature>
<feature type="topological domain" description="Cytoplasmic" evidence="1">
    <location>
        <begin position="451"/>
        <end position="467"/>
    </location>
</feature>
<feature type="transmembrane region" description="Helical; Name=11" evidence="1">
    <location>
        <begin position="468"/>
        <end position="488"/>
    </location>
</feature>
<feature type="topological domain" description="Extracellular" evidence="1">
    <location>
        <position position="489"/>
    </location>
</feature>
<feature type="transmembrane region" description="Helical; Name=12" evidence="1">
    <location>
        <begin position="490"/>
        <end position="510"/>
    </location>
</feature>
<feature type="topological domain" description="Cytoplasmic" evidence="1">
    <location>
        <begin position="511"/>
        <end position="567"/>
    </location>
</feature>
<feature type="region of interest" description="Disordered" evidence="2">
    <location>
        <begin position="1"/>
        <end position="45"/>
    </location>
</feature>
<feature type="compositionally biased region" description="Polar residues" evidence="2">
    <location>
        <begin position="1"/>
        <end position="16"/>
    </location>
</feature>
<feature type="compositionally biased region" description="Low complexity" evidence="2">
    <location>
        <begin position="17"/>
        <end position="28"/>
    </location>
</feature>
<feature type="glycosylation site" description="N-linked (GlcNAc...) asparagine" evidence="1">
    <location>
        <position position="87"/>
    </location>
</feature>
<feature type="glycosylation site" description="N-linked (GlcNAc...) asparagine" evidence="1">
    <location>
        <position position="227"/>
    </location>
</feature>
<evidence type="ECO:0000255" key="1"/>
<evidence type="ECO:0000256" key="2">
    <source>
        <dbReference type="SAM" id="MobiDB-lite"/>
    </source>
</evidence>
<evidence type="ECO:0000305" key="3"/>
<sequence length="567" mass="62858">MSGVNNTSANDLSTTESNSNSVANAPSVKTEHNDSKNSLNLDATEPPIDLPQKPLSAYTTVAILCLMIAFGGFIFGWDTGTISGFVNLSDFIRRFGQKNDKGTYYLSKVRMGLIVSIFNIGCAIGGIVLSKVGDIYGRRIGLITVTAIYVVGILIQITSINKWYQYFIGRIISGLGVGGIAVLSPMLISEVAPKQIRGTLVQLYQLMCTMGIFLGYCTNYGTKNYHNATQWRVGLGLCFAWTTFMVSGMMFVPESPRYLIEVGKDEEAKRSLSKSNKVSVDDPALLAEYDTIKAGIELEKLAGNASWSELLSTKTKVFQRVLMGVMIQSLQQLTGDNYFFYYGTTIFKSVGLKDSFQTSIIIGVVNFFSSFIAVYTIERFGRRTCLLWGAASMLCCFAVFASVGVTKLWPQGSSHQDITSQGAGNCMIVFTMFFIFSFATTWAGGCYVIVSETFPLRVKSRGMAIATAANWMWGFLISFFTPFITGAINFYYGYVFLGCLVFAYFYVFFFVPETKGLTLEEVNTMWLEGVPAWKSASWVPPERRTADYDADAIDHDDRPIYKRFFSS</sequence>
<keyword id="KW-0325">Glycoprotein</keyword>
<keyword id="KW-0472">Membrane</keyword>
<keyword id="KW-1185">Reference proteome</keyword>
<keyword id="KW-0677">Repeat</keyword>
<keyword id="KW-0762">Sugar transport</keyword>
<keyword id="KW-0812">Transmembrane</keyword>
<keyword id="KW-1133">Transmembrane helix</keyword>
<keyword id="KW-0813">Transport</keyword>
<name>HXT9_YEAST</name>
<protein>
    <recommendedName>
        <fullName>Hexose transporter HXT9</fullName>
    </recommendedName>
</protein>
<proteinExistence type="evidence at protein level"/>
<reference key="1">
    <citation type="journal article" date="1994" name="Yeast">
        <title>Sequence analysis of a 40.2 kb DNA fragment located near the left telomere of yeast chromosome X.</title>
        <authorList>
            <person name="Vandenbol M."/>
            <person name="Durand P."/>
            <person name="Bolle P.-A."/>
            <person name="Dion C."/>
            <person name="Portetelle D."/>
            <person name="Hilger F."/>
        </authorList>
    </citation>
    <scope>NUCLEOTIDE SEQUENCE [GENOMIC DNA]</scope>
    <source>
        <strain>ATCC 204508 / S288c</strain>
    </source>
</reference>
<reference key="2">
    <citation type="journal article" date="1996" name="EMBO J.">
        <title>Complete nucleotide sequence of Saccharomyces cerevisiae chromosome X.</title>
        <authorList>
            <person name="Galibert F."/>
            <person name="Alexandraki D."/>
            <person name="Baur A."/>
            <person name="Boles E."/>
            <person name="Chalwatzis N."/>
            <person name="Chuat J.-C."/>
            <person name="Coster F."/>
            <person name="Cziepluch C."/>
            <person name="de Haan M."/>
            <person name="Domdey H."/>
            <person name="Durand P."/>
            <person name="Entian K.-D."/>
            <person name="Gatius M."/>
            <person name="Goffeau A."/>
            <person name="Grivell L.A."/>
            <person name="Hennemann A."/>
            <person name="Herbert C.J."/>
            <person name="Heumann K."/>
            <person name="Hilger F."/>
            <person name="Hollenberg C.P."/>
            <person name="Huang M.-E."/>
            <person name="Jacq C."/>
            <person name="Jauniaux J.-C."/>
            <person name="Katsoulou C."/>
            <person name="Kirchrath L."/>
            <person name="Kleine K."/>
            <person name="Kordes E."/>
            <person name="Koetter P."/>
            <person name="Liebl S."/>
            <person name="Louis E.J."/>
            <person name="Manus V."/>
            <person name="Mewes H.-W."/>
            <person name="Miosga T."/>
            <person name="Obermaier B."/>
            <person name="Perea J."/>
            <person name="Pohl T.M."/>
            <person name="Portetelle D."/>
            <person name="Pujol A."/>
            <person name="Purnelle B."/>
            <person name="Ramezani Rad M."/>
            <person name="Rasmussen S.W."/>
            <person name="Rose M."/>
            <person name="Rossau R."/>
            <person name="Schaaff-Gerstenschlaeger I."/>
            <person name="Smits P.H.M."/>
            <person name="Scarcez T."/>
            <person name="Soriano N."/>
            <person name="To Van D."/>
            <person name="Tzermia M."/>
            <person name="Van Broekhoven A."/>
            <person name="Vandenbol M."/>
            <person name="Wedler H."/>
            <person name="von Wettstein D."/>
            <person name="Wambutt R."/>
            <person name="Zagulski M."/>
            <person name="Zollner A."/>
            <person name="Karpfinger-Hartl L."/>
        </authorList>
    </citation>
    <scope>NUCLEOTIDE SEQUENCE [LARGE SCALE GENOMIC DNA]</scope>
    <source>
        <strain>ATCC 204508 / S288c</strain>
    </source>
</reference>
<reference key="3">
    <citation type="journal article" date="2014" name="G3 (Bethesda)">
        <title>The reference genome sequence of Saccharomyces cerevisiae: Then and now.</title>
        <authorList>
            <person name="Engel S.R."/>
            <person name="Dietrich F.S."/>
            <person name="Fisk D.G."/>
            <person name="Binkley G."/>
            <person name="Balakrishnan R."/>
            <person name="Costanzo M.C."/>
            <person name="Dwight S.S."/>
            <person name="Hitz B.C."/>
            <person name="Karra K."/>
            <person name="Nash R.S."/>
            <person name="Weng S."/>
            <person name="Wong E.D."/>
            <person name="Lloyd P."/>
            <person name="Skrzypek M.S."/>
            <person name="Miyasato S.R."/>
            <person name="Simison M."/>
            <person name="Cherry J.M."/>
        </authorList>
    </citation>
    <scope>GENOME REANNOTATION</scope>
    <source>
        <strain>ATCC 204508 / S288c</strain>
    </source>
</reference>
<reference key="4">
    <citation type="journal article" date="2006" name="Proc. Natl. Acad. Sci. U.S.A.">
        <title>A global topology map of the Saccharomyces cerevisiae membrane proteome.</title>
        <authorList>
            <person name="Kim H."/>
            <person name="Melen K."/>
            <person name="Oesterberg M."/>
            <person name="von Heijne G."/>
        </authorList>
    </citation>
    <scope>TOPOLOGY [LARGE SCALE ANALYSIS]</scope>
    <source>
        <strain>ATCC 208353 / W303-1A</strain>
    </source>
</reference>
<comment type="function">
    <text>Probable glucose transporter.</text>
</comment>
<comment type="subcellular location">
    <subcellularLocation>
        <location>Membrane</location>
        <topology>Multi-pass membrane protein</topology>
    </subcellularLocation>
</comment>
<comment type="similarity">
    <text evidence="3">Belongs to the major facilitator superfamily. Sugar transporter (TC 2.A.1.1) family.</text>
</comment>
<organism>
    <name type="scientific">Saccharomyces cerevisiae (strain ATCC 204508 / S288c)</name>
    <name type="common">Baker's yeast</name>
    <dbReference type="NCBI Taxonomy" id="559292"/>
    <lineage>
        <taxon>Eukaryota</taxon>
        <taxon>Fungi</taxon>
        <taxon>Dikarya</taxon>
        <taxon>Ascomycota</taxon>
        <taxon>Saccharomycotina</taxon>
        <taxon>Saccharomycetes</taxon>
        <taxon>Saccharomycetales</taxon>
        <taxon>Saccharomycetaceae</taxon>
        <taxon>Saccharomyces</taxon>
    </lineage>
</organism>